<dbReference type="EC" id="2.7.7.7" evidence="1"/>
<dbReference type="EMBL" id="CP000283">
    <property type="protein sequence ID" value="ABE39138.1"/>
    <property type="molecule type" value="Genomic_DNA"/>
</dbReference>
<dbReference type="SMR" id="Q139V1"/>
<dbReference type="STRING" id="316057.RPD_1903"/>
<dbReference type="KEGG" id="rpd:RPD_1903"/>
<dbReference type="eggNOG" id="COG0587">
    <property type="taxonomic scope" value="Bacteria"/>
</dbReference>
<dbReference type="HOGENOM" id="CLU_001600_4_0_5"/>
<dbReference type="BioCyc" id="RPAL316057:RPD_RS09555-MONOMER"/>
<dbReference type="Proteomes" id="UP000001818">
    <property type="component" value="Chromosome"/>
</dbReference>
<dbReference type="GO" id="GO:0005737">
    <property type="term" value="C:cytoplasm"/>
    <property type="evidence" value="ECO:0007669"/>
    <property type="project" value="UniProtKB-SubCell"/>
</dbReference>
<dbReference type="GO" id="GO:0008408">
    <property type="term" value="F:3'-5' exonuclease activity"/>
    <property type="evidence" value="ECO:0007669"/>
    <property type="project" value="InterPro"/>
</dbReference>
<dbReference type="GO" id="GO:0003887">
    <property type="term" value="F:DNA-directed DNA polymerase activity"/>
    <property type="evidence" value="ECO:0007669"/>
    <property type="project" value="UniProtKB-UniRule"/>
</dbReference>
<dbReference type="GO" id="GO:0003676">
    <property type="term" value="F:nucleic acid binding"/>
    <property type="evidence" value="ECO:0007669"/>
    <property type="project" value="InterPro"/>
</dbReference>
<dbReference type="GO" id="GO:0006281">
    <property type="term" value="P:DNA repair"/>
    <property type="evidence" value="ECO:0007669"/>
    <property type="project" value="UniProtKB-UniRule"/>
</dbReference>
<dbReference type="GO" id="GO:0006260">
    <property type="term" value="P:DNA replication"/>
    <property type="evidence" value="ECO:0007669"/>
    <property type="project" value="UniProtKB-KW"/>
</dbReference>
<dbReference type="CDD" id="cd04485">
    <property type="entry name" value="DnaE_OBF"/>
    <property type="match status" value="1"/>
</dbReference>
<dbReference type="CDD" id="cd07434">
    <property type="entry name" value="PHP_PolIIIA_DnaE2"/>
    <property type="match status" value="1"/>
</dbReference>
<dbReference type="Gene3D" id="3.20.20.140">
    <property type="entry name" value="Metal-dependent hydrolases"/>
    <property type="match status" value="1"/>
</dbReference>
<dbReference type="Gene3D" id="2.40.50.140">
    <property type="entry name" value="Nucleic acid-binding proteins"/>
    <property type="match status" value="1"/>
</dbReference>
<dbReference type="HAMAP" id="MF_01902">
    <property type="entry name" value="DNApol_error_prone"/>
    <property type="match status" value="1"/>
</dbReference>
<dbReference type="InterPro" id="IPR011708">
    <property type="entry name" value="DNA_pol3_alpha_NTPase_dom"/>
</dbReference>
<dbReference type="InterPro" id="IPR040982">
    <property type="entry name" value="DNA_pol3_finger"/>
</dbReference>
<dbReference type="InterPro" id="IPR023073">
    <property type="entry name" value="DnaE2"/>
</dbReference>
<dbReference type="InterPro" id="IPR004805">
    <property type="entry name" value="DnaE2/DnaE/PolC"/>
</dbReference>
<dbReference type="InterPro" id="IPR029460">
    <property type="entry name" value="DNAPol_HHH"/>
</dbReference>
<dbReference type="InterPro" id="IPR012340">
    <property type="entry name" value="NA-bd_OB-fold"/>
</dbReference>
<dbReference type="InterPro" id="IPR004365">
    <property type="entry name" value="NA-bd_OB_tRNA"/>
</dbReference>
<dbReference type="InterPro" id="IPR004013">
    <property type="entry name" value="PHP_dom"/>
</dbReference>
<dbReference type="InterPro" id="IPR003141">
    <property type="entry name" value="Pol/His_phosphatase_N"/>
</dbReference>
<dbReference type="NCBIfam" id="TIGR00594">
    <property type="entry name" value="polc"/>
    <property type="match status" value="1"/>
</dbReference>
<dbReference type="NCBIfam" id="NF004225">
    <property type="entry name" value="PRK05672.1"/>
    <property type="match status" value="1"/>
</dbReference>
<dbReference type="PANTHER" id="PTHR32294">
    <property type="entry name" value="DNA POLYMERASE III SUBUNIT ALPHA"/>
    <property type="match status" value="1"/>
</dbReference>
<dbReference type="PANTHER" id="PTHR32294:SF4">
    <property type="entry name" value="ERROR-PRONE DNA POLYMERASE"/>
    <property type="match status" value="1"/>
</dbReference>
<dbReference type="Pfam" id="PF07733">
    <property type="entry name" value="DNA_pol3_alpha"/>
    <property type="match status" value="1"/>
</dbReference>
<dbReference type="Pfam" id="PF17657">
    <property type="entry name" value="DNA_pol3_finger"/>
    <property type="match status" value="1"/>
</dbReference>
<dbReference type="Pfam" id="PF14579">
    <property type="entry name" value="HHH_6"/>
    <property type="match status" value="1"/>
</dbReference>
<dbReference type="Pfam" id="PF02811">
    <property type="entry name" value="PHP"/>
    <property type="match status" value="1"/>
</dbReference>
<dbReference type="Pfam" id="PF01336">
    <property type="entry name" value="tRNA_anti-codon"/>
    <property type="match status" value="1"/>
</dbReference>
<dbReference type="SMART" id="SM00481">
    <property type="entry name" value="POLIIIAc"/>
    <property type="match status" value="1"/>
</dbReference>
<name>DNAE2_RHOPS</name>
<proteinExistence type="inferred from homology"/>
<organism>
    <name type="scientific">Rhodopseudomonas palustris (strain BisB5)</name>
    <dbReference type="NCBI Taxonomy" id="316057"/>
    <lineage>
        <taxon>Bacteria</taxon>
        <taxon>Pseudomonadati</taxon>
        <taxon>Pseudomonadota</taxon>
        <taxon>Alphaproteobacteria</taxon>
        <taxon>Hyphomicrobiales</taxon>
        <taxon>Nitrobacteraceae</taxon>
        <taxon>Rhodopseudomonas</taxon>
    </lineage>
</organism>
<comment type="function">
    <text evidence="1">DNA polymerase involved in damage-induced mutagenesis and translesion synthesis (TLS). It is not the major replicative DNA polymerase.</text>
</comment>
<comment type="catalytic activity">
    <reaction evidence="1">
        <text>DNA(n) + a 2'-deoxyribonucleoside 5'-triphosphate = DNA(n+1) + diphosphate</text>
        <dbReference type="Rhea" id="RHEA:22508"/>
        <dbReference type="Rhea" id="RHEA-COMP:17339"/>
        <dbReference type="Rhea" id="RHEA-COMP:17340"/>
        <dbReference type="ChEBI" id="CHEBI:33019"/>
        <dbReference type="ChEBI" id="CHEBI:61560"/>
        <dbReference type="ChEBI" id="CHEBI:173112"/>
        <dbReference type="EC" id="2.7.7.7"/>
    </reaction>
</comment>
<comment type="subcellular location">
    <subcellularLocation>
        <location evidence="1">Cytoplasm</location>
    </subcellularLocation>
</comment>
<comment type="similarity">
    <text evidence="1">Belongs to the DNA polymerase type-C family. DnaE2 subfamily.</text>
</comment>
<sequence>MKVPAYAEIGVTTNFSFLEGGSHPQDYVHEASRLGLEAIGIADRNTLAGVVRAYSELGNEDLIHKPRLLIGARLVFADGTPDVLAYPVDRAAYGRLCRLLSVGKLRGAKGECHLAVADLEAFSQGLSLVLMPPYRFQASAIAAALQRLTALESGGVWLGLTPYYRGDDKRRLARLKRVAWAARVPGIATNDVLYHHPERRALQDVLSCVREKTTIDKIGRRLEANAERHLKPAAEMARLFRADPDAIAETLRFAAGISFTLDELKYHYPDEPVPPGKTAQQHLEDLTWEGVAEYFPAGISDKLHATIDKELGIIAHRGYAQYFLTVHDIVRYARSQDILCQGRGSAANSAVCYVLGITCVDPTEIDLLFERFVSEERDEPPDIDVDFEHSRREEVMQYIYRRYGRHRAAIVATVIHYRPRSAIRDVGKALGLSEDVTAALADTVWGSWGKGLNEMQVKQAGLDPHNPLIGRAVELATELIGFPRHLSQHVGGYVLTQDRLDSYVPIGNAAMEGRTFIEWDKDDIDAIKMMKVDVLALGMLTCIRKGFDLIAQHKGVRYALSDIKSEDDNAVYQMLQRGESIGVFQVESRAQMNMLPRLKPKCFYDLVIEVAIVRPGPIQGDMVHPYLRRRNKQEPVVYPAPAGHAGDANELEVILGKTLGVPLFQEQAMRIAIEAAHFTPDEANQLRRAMATFRNVGTIGKFESKMVGNLVARGYDPVFAKNCFEQIKGFGSYGFPESHAASFAKLVYVSAWMKCEHPDAFCCALLNSQPMGFYAPAQIVGDARANEVEVRPVDVSFSDGQCTLEERCGKHHAVRLGFRQIDGFVWADPDEERVRREAGLLPSEDWAARIVAARARGPFNSLERFARLTALPKRALILLADADAFRSLGLDRRAALWAVRRLPDDVPLPLFEAASASEQLDENAAPLPQMPTAEHVVADYQTVRLSLKGHPMEFLRPLFAAERVVTCRSISESRVSGQRMRCAGVVLVRQRPGSAKGVVFITLEDETGIANLVVWPAVMETFRKEVMGARLLWVEGRIQASPEGVVHLVAERLSDRSFEMTRLSDNLAAPRLGELHEPLNDDRREHPDNPAQRIRHPRDVRILPPSRDFH</sequence>
<feature type="chain" id="PRO_1000070597" description="Error-prone DNA polymerase">
    <location>
        <begin position="1"/>
        <end position="1110"/>
    </location>
</feature>
<feature type="region of interest" description="Disordered" evidence="2">
    <location>
        <begin position="1072"/>
        <end position="1110"/>
    </location>
</feature>
<feature type="compositionally biased region" description="Basic and acidic residues" evidence="2">
    <location>
        <begin position="1073"/>
        <end position="1088"/>
    </location>
</feature>
<feature type="compositionally biased region" description="Basic and acidic residues" evidence="2">
    <location>
        <begin position="1097"/>
        <end position="1110"/>
    </location>
</feature>
<accession>Q139V1</accession>
<protein>
    <recommendedName>
        <fullName evidence="1">Error-prone DNA polymerase</fullName>
        <ecNumber evidence="1">2.7.7.7</ecNumber>
    </recommendedName>
</protein>
<evidence type="ECO:0000255" key="1">
    <source>
        <dbReference type="HAMAP-Rule" id="MF_01902"/>
    </source>
</evidence>
<evidence type="ECO:0000256" key="2">
    <source>
        <dbReference type="SAM" id="MobiDB-lite"/>
    </source>
</evidence>
<keyword id="KW-0963">Cytoplasm</keyword>
<keyword id="KW-0227">DNA damage</keyword>
<keyword id="KW-0234">DNA repair</keyword>
<keyword id="KW-0235">DNA replication</keyword>
<keyword id="KW-0239">DNA-directed DNA polymerase</keyword>
<keyword id="KW-0548">Nucleotidyltransferase</keyword>
<keyword id="KW-0808">Transferase</keyword>
<reference key="1">
    <citation type="submission" date="2006-03" db="EMBL/GenBank/DDBJ databases">
        <title>Complete sequence of Rhodopseudomonas palustris BisB5.</title>
        <authorList>
            <consortium name="US DOE Joint Genome Institute"/>
            <person name="Copeland A."/>
            <person name="Lucas S."/>
            <person name="Lapidus A."/>
            <person name="Barry K."/>
            <person name="Detter J.C."/>
            <person name="Glavina del Rio T."/>
            <person name="Hammon N."/>
            <person name="Israni S."/>
            <person name="Dalin E."/>
            <person name="Tice H."/>
            <person name="Pitluck S."/>
            <person name="Chain P."/>
            <person name="Malfatti S."/>
            <person name="Shin M."/>
            <person name="Vergez L."/>
            <person name="Schmutz J."/>
            <person name="Larimer F."/>
            <person name="Land M."/>
            <person name="Hauser L."/>
            <person name="Pelletier D.A."/>
            <person name="Kyrpides N."/>
            <person name="Lykidis A."/>
            <person name="Oda Y."/>
            <person name="Harwood C.S."/>
            <person name="Richardson P."/>
        </authorList>
    </citation>
    <scope>NUCLEOTIDE SEQUENCE [LARGE SCALE GENOMIC DNA]</scope>
    <source>
        <strain>BisB5</strain>
    </source>
</reference>
<gene>
    <name evidence="1" type="primary">dnaE2</name>
    <name type="ordered locus">RPD_1903</name>
</gene>